<feature type="signal peptide" evidence="2">
    <location>
        <begin position="1"/>
        <end position="22"/>
    </location>
</feature>
<feature type="peptide" id="PRO_0000289818" description="Beta-defensin 107A">
    <location>
        <begin position="23"/>
        <end position="66"/>
    </location>
</feature>
<feature type="disulfide bond" evidence="1">
    <location>
        <begin position="37"/>
        <end position="51"/>
    </location>
</feature>
<feature type="disulfide bond" evidence="1">
    <location>
        <begin position="41"/>
        <end position="60"/>
    </location>
</feature>
<evidence type="ECO:0000250" key="1"/>
<evidence type="ECO:0000255" key="2"/>
<evidence type="ECO:0000305" key="3"/>
<accession>A4H215</accession>
<comment type="function">
    <text evidence="1">Has antibacterial activity.</text>
</comment>
<comment type="subcellular location">
    <subcellularLocation>
        <location evidence="1">Secreted</location>
    </subcellularLocation>
</comment>
<comment type="similarity">
    <text evidence="3">Belongs to the beta-defensin family.</text>
</comment>
<name>D107A_GORGO</name>
<gene>
    <name type="primary">DEFB107A</name>
    <name type="synonym">DEFB107</name>
</gene>
<protein>
    <recommendedName>
        <fullName>Beta-defensin 107A</fullName>
    </recommendedName>
    <alternativeName>
        <fullName>Defensin, beta 107</fullName>
    </alternativeName>
    <alternativeName>
        <fullName>Defensin, beta 107A</fullName>
    </alternativeName>
</protein>
<keyword id="KW-0044">Antibiotic</keyword>
<keyword id="KW-0929">Antimicrobial</keyword>
<keyword id="KW-0211">Defensin</keyword>
<keyword id="KW-1015">Disulfide bond</keyword>
<keyword id="KW-1185">Reference proteome</keyword>
<keyword id="KW-0964">Secreted</keyword>
<keyword id="KW-0732">Signal</keyword>
<organism>
    <name type="scientific">Gorilla gorilla gorilla</name>
    <name type="common">Western lowland gorilla</name>
    <dbReference type="NCBI Taxonomy" id="9595"/>
    <lineage>
        <taxon>Eukaryota</taxon>
        <taxon>Metazoa</taxon>
        <taxon>Chordata</taxon>
        <taxon>Craniata</taxon>
        <taxon>Vertebrata</taxon>
        <taxon>Euteleostomi</taxon>
        <taxon>Mammalia</taxon>
        <taxon>Eutheria</taxon>
        <taxon>Euarchontoglires</taxon>
        <taxon>Primates</taxon>
        <taxon>Haplorrhini</taxon>
        <taxon>Catarrhini</taxon>
        <taxon>Hominidae</taxon>
        <taxon>Gorilla</taxon>
    </lineage>
</organism>
<sequence length="66" mass="7593">MKIFFFIFAALFLLAQIFQARTAIHRALICKRMEGHCEAECLTFEAKIGGCRAELAPFCCKNRKKH</sequence>
<reference key="1">
    <citation type="submission" date="2006-11" db="EMBL/GenBank/DDBJ databases">
        <title>Evolution and sequence variation of human beta-defensin genes.</title>
        <authorList>
            <person name="Hollox E.J."/>
            <person name="Armour J.A.L."/>
        </authorList>
    </citation>
    <scope>NUCLEOTIDE SEQUENCE [GENOMIC DNA]</scope>
</reference>
<proteinExistence type="inferred from homology"/>
<dbReference type="EMBL" id="AM410120">
    <property type="protein sequence ID" value="CAL68935.1"/>
    <property type="molecule type" value="Genomic_DNA"/>
</dbReference>
<dbReference type="FunCoup" id="A4H215">
    <property type="interactions" value="1"/>
</dbReference>
<dbReference type="STRING" id="9593.ENSGGOP00000003577"/>
<dbReference type="eggNOG" id="ENOG502TF47">
    <property type="taxonomic scope" value="Eukaryota"/>
</dbReference>
<dbReference type="HOGENOM" id="CLU_2757177_0_0_1"/>
<dbReference type="InParanoid" id="A4H215"/>
<dbReference type="Proteomes" id="UP000001519">
    <property type="component" value="Unplaced"/>
</dbReference>
<dbReference type="GO" id="GO:0005576">
    <property type="term" value="C:extracellular region"/>
    <property type="evidence" value="ECO:0007669"/>
    <property type="project" value="UniProtKB-SubCell"/>
</dbReference>
<dbReference type="GO" id="GO:0042742">
    <property type="term" value="P:defense response to bacterium"/>
    <property type="evidence" value="ECO:0007669"/>
    <property type="project" value="UniProtKB-KW"/>
</dbReference>
<dbReference type="GO" id="GO:0045087">
    <property type="term" value="P:innate immune response"/>
    <property type="evidence" value="ECO:0007669"/>
    <property type="project" value="InterPro"/>
</dbReference>
<dbReference type="InterPro" id="IPR025933">
    <property type="entry name" value="Beta_defensin_dom"/>
</dbReference>
<dbReference type="Pfam" id="PF13841">
    <property type="entry name" value="Defensin_beta_2"/>
    <property type="match status" value="1"/>
</dbReference>